<gene>
    <name type="ordered locus">Nmul_A0993</name>
</gene>
<accession>Q2YAC5</accession>
<evidence type="ECO:0000255" key="1">
    <source>
        <dbReference type="HAMAP-Rule" id="MF_01403"/>
    </source>
</evidence>
<comment type="cofactor">
    <cofactor evidence="1">
        <name>thiamine diphosphate</name>
        <dbReference type="ChEBI" id="CHEBI:58937"/>
    </cofactor>
</comment>
<comment type="similarity">
    <text evidence="1">Belongs to the XFP family.</text>
</comment>
<dbReference type="EC" id="4.1.2.-" evidence="1"/>
<dbReference type="EMBL" id="CP000103">
    <property type="protein sequence ID" value="ABB74296.1"/>
    <property type="molecule type" value="Genomic_DNA"/>
</dbReference>
<dbReference type="RefSeq" id="WP_011380341.1">
    <property type="nucleotide sequence ID" value="NC_007614.1"/>
</dbReference>
<dbReference type="SMR" id="Q2YAC5"/>
<dbReference type="STRING" id="323848.Nmul_A0993"/>
<dbReference type="KEGG" id="nmu:Nmul_A0993"/>
<dbReference type="eggNOG" id="COG3957">
    <property type="taxonomic scope" value="Bacteria"/>
</dbReference>
<dbReference type="HOGENOM" id="CLU_013954_2_0_4"/>
<dbReference type="OrthoDB" id="9768449at2"/>
<dbReference type="Proteomes" id="UP000002718">
    <property type="component" value="Chromosome"/>
</dbReference>
<dbReference type="GO" id="GO:0016832">
    <property type="term" value="F:aldehyde-lyase activity"/>
    <property type="evidence" value="ECO:0007669"/>
    <property type="project" value="UniProtKB-UniRule"/>
</dbReference>
<dbReference type="GO" id="GO:0005975">
    <property type="term" value="P:carbohydrate metabolic process"/>
    <property type="evidence" value="ECO:0007669"/>
    <property type="project" value="InterPro"/>
</dbReference>
<dbReference type="CDD" id="cd02011">
    <property type="entry name" value="TPP_PK"/>
    <property type="match status" value="1"/>
</dbReference>
<dbReference type="FunFam" id="3.40.50.970:FF:000091">
    <property type="entry name" value="Xylulose-5-phosphate/fructose-6-phosphate phosphoketolase"/>
    <property type="match status" value="1"/>
</dbReference>
<dbReference type="Gene3D" id="3.40.50.920">
    <property type="match status" value="1"/>
</dbReference>
<dbReference type="Gene3D" id="3.40.50.970">
    <property type="match status" value="2"/>
</dbReference>
<dbReference type="HAMAP" id="MF_01403">
    <property type="entry name" value="Phosphoketolase"/>
    <property type="match status" value="1"/>
</dbReference>
<dbReference type="InterPro" id="IPR023962">
    <property type="entry name" value="Phosphoketolase"/>
</dbReference>
<dbReference type="InterPro" id="IPR029061">
    <property type="entry name" value="THDP-binding"/>
</dbReference>
<dbReference type="InterPro" id="IPR009014">
    <property type="entry name" value="Transketo_C/PFOR_II"/>
</dbReference>
<dbReference type="InterPro" id="IPR005593">
    <property type="entry name" value="Xul5P/Fru6P_PKetolase"/>
</dbReference>
<dbReference type="InterPro" id="IPR018969">
    <property type="entry name" value="Xul5P/Fru6P_PKetolase_C"/>
</dbReference>
<dbReference type="InterPro" id="IPR019790">
    <property type="entry name" value="Xul5P/Fru6P_PKetolase_CS"/>
</dbReference>
<dbReference type="InterPro" id="IPR018970">
    <property type="entry name" value="Xul5P/Fru6P_PKetolase_N"/>
</dbReference>
<dbReference type="InterPro" id="IPR019789">
    <property type="entry name" value="Xul5P/Fru6P_PKetolase_ThDP_BS"/>
</dbReference>
<dbReference type="NCBIfam" id="NF003616">
    <property type="entry name" value="PRK05261.1-1"/>
    <property type="match status" value="1"/>
</dbReference>
<dbReference type="NCBIfam" id="NF003617">
    <property type="entry name" value="PRK05261.1-2"/>
    <property type="match status" value="1"/>
</dbReference>
<dbReference type="NCBIfam" id="NF003619">
    <property type="entry name" value="PRK05261.1-4"/>
    <property type="match status" value="1"/>
</dbReference>
<dbReference type="NCBIfam" id="NF003621">
    <property type="entry name" value="PRK05261.1-6"/>
    <property type="match status" value="1"/>
</dbReference>
<dbReference type="PANTHER" id="PTHR31273">
    <property type="entry name" value="PHOSPHOKETOLASE-RELATED"/>
    <property type="match status" value="1"/>
</dbReference>
<dbReference type="PANTHER" id="PTHR31273:SF0">
    <property type="entry name" value="PHOSPHOKETOLASE-RELATED"/>
    <property type="match status" value="1"/>
</dbReference>
<dbReference type="Pfam" id="PF03894">
    <property type="entry name" value="XFP"/>
    <property type="match status" value="1"/>
</dbReference>
<dbReference type="Pfam" id="PF09363">
    <property type="entry name" value="XFP_C"/>
    <property type="match status" value="1"/>
</dbReference>
<dbReference type="Pfam" id="PF09364">
    <property type="entry name" value="XFP_N"/>
    <property type="match status" value="1"/>
</dbReference>
<dbReference type="PIRSF" id="PIRSF017245">
    <property type="entry name" value="Phosphoketolase"/>
    <property type="match status" value="1"/>
</dbReference>
<dbReference type="SUPFAM" id="SSF52518">
    <property type="entry name" value="Thiamin diphosphate-binding fold (THDP-binding)"/>
    <property type="match status" value="2"/>
</dbReference>
<dbReference type="PROSITE" id="PS60002">
    <property type="entry name" value="PHOSPHOKETOLASE_1"/>
    <property type="match status" value="1"/>
</dbReference>
<dbReference type="PROSITE" id="PS60003">
    <property type="entry name" value="PHOSPHOKETOLASE_2"/>
    <property type="match status" value="1"/>
</dbReference>
<organism>
    <name type="scientific">Nitrosospira multiformis (strain ATCC 25196 / NCIMB 11849 / C 71)</name>
    <dbReference type="NCBI Taxonomy" id="323848"/>
    <lineage>
        <taxon>Bacteria</taxon>
        <taxon>Pseudomonadati</taxon>
        <taxon>Pseudomonadota</taxon>
        <taxon>Betaproteobacteria</taxon>
        <taxon>Nitrosomonadales</taxon>
        <taxon>Nitrosomonadaceae</taxon>
        <taxon>Nitrosospira</taxon>
    </lineage>
</organism>
<sequence length="807" mass="91223">MNRASPAVKTESNPLSTDELRKIDAYWRAANYLSVGQIYLLDNPLLKEPLTVTHIKPRLLGHWGTCPGLSFIYAHLNRIIKKFDLDMFYVCGPGHGGPAMVANTWLEGSYSEFYPRISRDATGMKRLFRQFSFPGGIPSHVAPETAGSINEGGELGYSLSHAFGAAFDNPDLIVACVVGDGEAETGPLAASWHSNKFLNPARDGAVLPILHLNGYKIANPTILARISHEELESLFAGYGYQPYFVEGSDPGPMHQSMAAVLDTAIESIRRIQREARSRGVNSGERQEAVTYPRWPLIILRSPKGWTGPEEVDGKKLEDYWRSHQVPLAELGSKPDHLKQLEDWMRSYKPEELFDENGCLMPELAALAPEGDRRMGANPHANGGLLLKELEMPDFRSYAVDVPVPGTEVREATRETGKFLRDIMKLNLDSSNFRVMGPDETSSNRLDALFDVTARAWVAQQLPEDEHLSPDGRVMEILSEHICQGWLEGYLLTGRHGLFSCYEAFIHIVDSMFNQHAKWLKVSKEIPWRRPIASLNYLLTSHVWRQDHNGFSHQDPGFIDLVVNKKASIIRVYLPPDANTLLYITDKCLRSRNFINVIVAGKQPALQWLDMDAAIRHGSAGIGIWGWASNDQEDEPDVVMACAGDIPTLETLAAVDLLRRHVPELRIRVVNIVDLMTLQPRSEHPDGLSDWDFDTLFTTNKPIIFAYHGYPWLIHRLTYRRTNHPNLHVRGYKEEGTTTTPFDMTVLNDLDRFHLVMDVADRVPKLSSKGAYLKQLMRDKLIDHKRYIRQYGEDMPEIRDWHWPSPGS</sequence>
<reference key="1">
    <citation type="submission" date="2005-08" db="EMBL/GenBank/DDBJ databases">
        <title>Complete sequence of chromosome 1 of Nitrosospira multiformis ATCC 25196.</title>
        <authorList>
            <person name="Copeland A."/>
            <person name="Lucas S."/>
            <person name="Lapidus A."/>
            <person name="Barry K."/>
            <person name="Detter J.C."/>
            <person name="Glavina T."/>
            <person name="Hammon N."/>
            <person name="Israni S."/>
            <person name="Pitluck S."/>
            <person name="Chain P."/>
            <person name="Malfatti S."/>
            <person name="Shin M."/>
            <person name="Vergez L."/>
            <person name="Schmutz J."/>
            <person name="Larimer F."/>
            <person name="Land M."/>
            <person name="Hauser L."/>
            <person name="Kyrpides N."/>
            <person name="Lykidis A."/>
            <person name="Richardson P."/>
        </authorList>
    </citation>
    <scope>NUCLEOTIDE SEQUENCE [LARGE SCALE GENOMIC DNA]</scope>
    <source>
        <strain>ATCC 25196 / NCIMB 11849 / C 71</strain>
    </source>
</reference>
<proteinExistence type="inferred from homology"/>
<name>PHK_NITMU</name>
<feature type="chain" id="PRO_1000068389" description="Probable phosphoketolase">
    <location>
        <begin position="1"/>
        <end position="807"/>
    </location>
</feature>
<protein>
    <recommendedName>
        <fullName evidence="1">Probable phosphoketolase</fullName>
        <ecNumber evidence="1">4.1.2.-</ecNumber>
    </recommendedName>
</protein>
<keyword id="KW-0456">Lyase</keyword>
<keyword id="KW-1185">Reference proteome</keyword>
<keyword id="KW-0786">Thiamine pyrophosphate</keyword>